<proteinExistence type="evidence at protein level"/>
<name>FIN1_YEAST</name>
<comment type="function">
    <text>Forms cell-cycle specific filaments between the spindle pole bodies of dividing yeast cells.</text>
</comment>
<comment type="subunit">
    <text evidence="3">Homooligomer; in vitro, FIN1 self-assembles into 10 nm diameter filaments. Interacts with the 14-3-3 proteins BMH1 and BMH2, and the protein phosphatase 1 complex catalytic subunit GLC7.</text>
</comment>
<comment type="interaction">
    <interactant intactId="EBI-32941">
        <id>Q03898</id>
    </interactant>
    <interactant intactId="EBI-4192">
        <id>Q00684</id>
        <label>CDC14</label>
    </interactant>
    <organismsDiffer>false</organismsDiffer>
    <experiments>2</experiments>
</comment>
<comment type="interaction">
    <interactant intactId="EBI-32941">
        <id>Q03898</id>
    </interactant>
    <interactant intactId="EBI-4515">
        <id>P24869</id>
        <label>CLB2</label>
    </interactant>
    <organismsDiffer>false</organismsDiffer>
    <experiments>2</experiments>
</comment>
<comment type="interaction">
    <interactant intactId="EBI-32941">
        <id>Q03898</id>
    </interactant>
    <interactant intactId="EBI-13715">
        <id>P32598</id>
        <label>GLC7</label>
    </interactant>
    <organismsDiffer>false</organismsDiffer>
    <experiments>3</experiments>
</comment>
<comment type="subcellular location">
    <subcellularLocation>
        <location evidence="2">Nucleus</location>
    </subcellularLocation>
    <subcellularLocation>
        <location evidence="2">Cytoplasm</location>
    </subcellularLocation>
    <subcellularLocation>
        <location evidence="2">Cytoplasm</location>
        <location evidence="2">Cytoskeleton</location>
    </subcellularLocation>
    <subcellularLocation>
        <location evidence="2">Cytoplasm</location>
        <location evidence="2">Cytoskeleton</location>
        <location evidence="2">Spindle pole</location>
    </subcellularLocation>
    <text>Nuclear during early bud formation, located at the spindle poles during late mitosis, very low abundance in resting cells.</text>
</comment>
<comment type="induction">
    <text evidence="2">Induced during G2-M transition.</text>
</comment>
<comment type="domain">
    <text>The coiled coil domain is essential for dimerization.</text>
</comment>
<comment type="PTM">
    <text evidence="4">Phosphorylated by CDC28. Phosphorylation is required for BMH1 and BMH2 interaction. Dephosphorylation by GLC7 depends on the presence of BMH1 and BMH2.</text>
</comment>
<comment type="miscellaneous">
    <text>Strong overexpression results in the accumulation of filamentous structures resembling the neurofibrillary tangles found in cells of patients with Alzheimer disease.</text>
</comment>
<comment type="miscellaneous">
    <text>Overexpression is lethal in haploids and causes very poor growth in diploids.</text>
</comment>
<evidence type="ECO:0000255" key="1"/>
<evidence type="ECO:0000269" key="2">
    <source>
    </source>
</evidence>
<evidence type="ECO:0000269" key="3">
    <source>
    </source>
</evidence>
<evidence type="ECO:0000269" key="4">
    <source>
    </source>
</evidence>
<evidence type="ECO:0007744" key="5">
    <source>
    </source>
</evidence>
<evidence type="ECO:0007744" key="6">
    <source>
    </source>
</evidence>
<gene>
    <name type="primary">FIN1</name>
    <name type="ordered locus">YDR130C</name>
    <name type="ORF">YD9302.05C</name>
</gene>
<accession>Q03898</accession>
<accession>D6VSB6</accession>
<feature type="chain" id="PRO_0000087257" description="Filament protein FIN1">
    <location>
        <begin position="1"/>
        <end position="291"/>
    </location>
</feature>
<feature type="coiled-coil region" evidence="1">
    <location>
        <begin position="254"/>
        <end position="284"/>
    </location>
</feature>
<feature type="modified residue" description="Phosphoserine" evidence="5">
    <location>
        <position position="54"/>
    </location>
</feature>
<feature type="modified residue" description="Phosphothreonine" evidence="5">
    <location>
        <position position="68"/>
    </location>
</feature>
<feature type="modified residue" description="Phosphoserine" evidence="5 6">
    <location>
        <position position="74"/>
    </location>
</feature>
<feature type="modified residue" description="Phosphoserine" evidence="5">
    <location>
        <position position="88"/>
    </location>
</feature>
<organism>
    <name type="scientific">Saccharomyces cerevisiae (strain ATCC 204508 / S288c)</name>
    <name type="common">Baker's yeast</name>
    <dbReference type="NCBI Taxonomy" id="559292"/>
    <lineage>
        <taxon>Eukaryota</taxon>
        <taxon>Fungi</taxon>
        <taxon>Dikarya</taxon>
        <taxon>Ascomycota</taxon>
        <taxon>Saccharomycotina</taxon>
        <taxon>Saccharomycetes</taxon>
        <taxon>Saccharomycetales</taxon>
        <taxon>Saccharomycetaceae</taxon>
        <taxon>Saccharomyces</taxon>
    </lineage>
</organism>
<keyword id="KW-0175">Coiled coil</keyword>
<keyword id="KW-0963">Cytoplasm</keyword>
<keyword id="KW-0206">Cytoskeleton</keyword>
<keyword id="KW-0539">Nucleus</keyword>
<keyword id="KW-0597">Phosphoprotein</keyword>
<keyword id="KW-1185">Reference proteome</keyword>
<sequence>MSNKSNRRSLRDIGNTIGRNNIPSDKDNVFVRLSMSPLRTTSQKEFLKPPMRISPNKTDGMKHSIQVTPRRIMSPECLKGYVSKETQSLDRPQFKNSNKNVKIQNSDHITNIIFPTSPTKLTFSNENKIGGDGSLTRIRARFKNGLMSPERIQQQQQQHILPSDAKSNTDLCSNTELKDAPFENDLPRAKLKGKNLLVELKKEEEDVGNGIESLTKSNTKLNSMLANEGKIHKASFQKSVKFKLPDNIVTEETVELKEIKDLLLQMLRRQREIESRLSNIELQLTEIPKHK</sequence>
<protein>
    <recommendedName>
        <fullName>Filament protein FIN1</fullName>
    </recommendedName>
    <alternativeName>
        <fullName>Filaments in between nuclei protein 1</fullName>
    </alternativeName>
</protein>
<dbReference type="EMBL" id="Z48179">
    <property type="protein sequence ID" value="CAA88211.1"/>
    <property type="molecule type" value="Genomic_DNA"/>
</dbReference>
<dbReference type="EMBL" id="AY557684">
    <property type="protein sequence ID" value="AAS56010.1"/>
    <property type="molecule type" value="Genomic_DNA"/>
</dbReference>
<dbReference type="EMBL" id="BK006938">
    <property type="protein sequence ID" value="DAA11976.1"/>
    <property type="molecule type" value="Genomic_DNA"/>
</dbReference>
<dbReference type="PIR" id="S51857">
    <property type="entry name" value="S51857"/>
</dbReference>
<dbReference type="RefSeq" id="NP_010415.1">
    <property type="nucleotide sequence ID" value="NM_001180438.1"/>
</dbReference>
<dbReference type="SMR" id="Q03898"/>
<dbReference type="BioGRID" id="32186">
    <property type="interactions" value="206"/>
</dbReference>
<dbReference type="DIP" id="DIP-1342N"/>
<dbReference type="FunCoup" id="Q03898">
    <property type="interactions" value="221"/>
</dbReference>
<dbReference type="IntAct" id="Q03898">
    <property type="interactions" value="8"/>
</dbReference>
<dbReference type="MINT" id="Q03898"/>
<dbReference type="STRING" id="4932.YDR130C"/>
<dbReference type="iPTMnet" id="Q03898"/>
<dbReference type="PaxDb" id="4932-YDR130C"/>
<dbReference type="PeptideAtlas" id="Q03898"/>
<dbReference type="EnsemblFungi" id="YDR130C_mRNA">
    <property type="protein sequence ID" value="YDR130C"/>
    <property type="gene ID" value="YDR130C"/>
</dbReference>
<dbReference type="GeneID" id="851708"/>
<dbReference type="KEGG" id="sce:YDR130C"/>
<dbReference type="AGR" id="SGD:S000002537"/>
<dbReference type="SGD" id="S000002537">
    <property type="gene designation" value="FIN1"/>
</dbReference>
<dbReference type="VEuPathDB" id="FungiDB:YDR130C"/>
<dbReference type="eggNOG" id="ENOG502S4EM">
    <property type="taxonomic scope" value="Eukaryota"/>
</dbReference>
<dbReference type="HOGENOM" id="CLU_095077_0_0_1"/>
<dbReference type="InParanoid" id="Q03898"/>
<dbReference type="OMA" id="MRISPNK"/>
<dbReference type="OrthoDB" id="4052026at2759"/>
<dbReference type="BioCyc" id="YEAST:G3O-29729-MONOMER"/>
<dbReference type="BioGRID-ORCS" id="851708">
    <property type="hits" value="0 hits in 10 CRISPR screens"/>
</dbReference>
<dbReference type="CD-CODE" id="876000F7">
    <property type="entry name" value="Centrosome"/>
</dbReference>
<dbReference type="PRO" id="PR:Q03898"/>
<dbReference type="Proteomes" id="UP000002311">
    <property type="component" value="Chromosome IV"/>
</dbReference>
<dbReference type="RNAct" id="Q03898">
    <property type="molecule type" value="protein"/>
</dbReference>
<dbReference type="GO" id="GO:0000235">
    <property type="term" value="C:astral microtubule"/>
    <property type="evidence" value="ECO:0000314"/>
    <property type="project" value="SGD"/>
</dbReference>
<dbReference type="GO" id="GO:0005737">
    <property type="term" value="C:cytoplasm"/>
    <property type="evidence" value="ECO:0007005"/>
    <property type="project" value="SGD"/>
</dbReference>
<dbReference type="GO" id="GO:0005882">
    <property type="term" value="C:intermediate filament"/>
    <property type="evidence" value="ECO:0000314"/>
    <property type="project" value="SGD"/>
</dbReference>
<dbReference type="GO" id="GO:0000776">
    <property type="term" value="C:kinetochore"/>
    <property type="evidence" value="ECO:0000314"/>
    <property type="project" value="SGD"/>
</dbReference>
<dbReference type="GO" id="GO:0072686">
    <property type="term" value="C:mitotic spindle"/>
    <property type="evidence" value="ECO:0000314"/>
    <property type="project" value="SGD"/>
</dbReference>
<dbReference type="GO" id="GO:0005634">
    <property type="term" value="C:nucleus"/>
    <property type="evidence" value="ECO:0000314"/>
    <property type="project" value="SGD"/>
</dbReference>
<dbReference type="GO" id="GO:0000164">
    <property type="term" value="C:protein phosphatase type 1 complex"/>
    <property type="evidence" value="ECO:0000353"/>
    <property type="project" value="SGD"/>
</dbReference>
<dbReference type="GO" id="GO:0005876">
    <property type="term" value="C:spindle microtubule"/>
    <property type="evidence" value="ECO:0000314"/>
    <property type="project" value="SGD"/>
</dbReference>
<dbReference type="GO" id="GO:0000922">
    <property type="term" value="C:spindle pole"/>
    <property type="evidence" value="ECO:0007669"/>
    <property type="project" value="UniProtKB-SubCell"/>
</dbReference>
<dbReference type="GO" id="GO:0005816">
    <property type="term" value="C:spindle pole body"/>
    <property type="evidence" value="ECO:0000314"/>
    <property type="project" value="SGD"/>
</dbReference>
<dbReference type="GO" id="GO:0008017">
    <property type="term" value="F:microtubule binding"/>
    <property type="evidence" value="ECO:0000314"/>
    <property type="project" value="SGD"/>
</dbReference>
<dbReference type="GO" id="GO:0005200">
    <property type="term" value="F:structural constituent of cytoskeleton"/>
    <property type="evidence" value="ECO:0000314"/>
    <property type="project" value="SGD"/>
</dbReference>
<dbReference type="GO" id="GO:1902426">
    <property type="term" value="P:deactivation of mitotic spindle assembly checkpoint"/>
    <property type="evidence" value="ECO:0000315"/>
    <property type="project" value="SGD"/>
</dbReference>
<dbReference type="GO" id="GO:0045104">
    <property type="term" value="P:intermediate filament cytoskeleton organization"/>
    <property type="evidence" value="ECO:0000314"/>
    <property type="project" value="SGD"/>
</dbReference>
<dbReference type="GO" id="GO:0000070">
    <property type="term" value="P:mitotic sister chromatid segregation"/>
    <property type="evidence" value="ECO:0000315"/>
    <property type="project" value="SGD"/>
</dbReference>
<dbReference type="GO" id="GO:0007052">
    <property type="term" value="P:mitotic spindle organization"/>
    <property type="evidence" value="ECO:0000315"/>
    <property type="project" value="SGD"/>
</dbReference>
<dbReference type="GO" id="GO:0034501">
    <property type="term" value="P:protein localization to kinetochore"/>
    <property type="evidence" value="ECO:0000315"/>
    <property type="project" value="SGD"/>
</dbReference>
<dbReference type="InterPro" id="IPR035260">
    <property type="entry name" value="Fin1"/>
</dbReference>
<dbReference type="Pfam" id="PF17300">
    <property type="entry name" value="FIN1"/>
    <property type="match status" value="1"/>
</dbReference>
<reference key="1">
    <citation type="journal article" date="1997" name="Nature">
        <title>The nucleotide sequence of Saccharomyces cerevisiae chromosome IV.</title>
        <authorList>
            <person name="Jacq C."/>
            <person name="Alt-Moerbe J."/>
            <person name="Andre B."/>
            <person name="Arnold W."/>
            <person name="Bahr A."/>
            <person name="Ballesta J.P.G."/>
            <person name="Bargues M."/>
            <person name="Baron L."/>
            <person name="Becker A."/>
            <person name="Biteau N."/>
            <person name="Bloecker H."/>
            <person name="Blugeon C."/>
            <person name="Boskovic J."/>
            <person name="Brandt P."/>
            <person name="Brueckner M."/>
            <person name="Buitrago M.J."/>
            <person name="Coster F."/>
            <person name="Delaveau T."/>
            <person name="del Rey F."/>
            <person name="Dujon B."/>
            <person name="Eide L.G."/>
            <person name="Garcia-Cantalejo J.M."/>
            <person name="Goffeau A."/>
            <person name="Gomez-Peris A."/>
            <person name="Granotier C."/>
            <person name="Hanemann V."/>
            <person name="Hankeln T."/>
            <person name="Hoheisel J.D."/>
            <person name="Jaeger W."/>
            <person name="Jimenez A."/>
            <person name="Jonniaux J.-L."/>
            <person name="Kraemer C."/>
            <person name="Kuester H."/>
            <person name="Laamanen P."/>
            <person name="Legros Y."/>
            <person name="Louis E.J."/>
            <person name="Moeller-Rieker S."/>
            <person name="Monnet A."/>
            <person name="Moro M."/>
            <person name="Mueller-Auer S."/>
            <person name="Nussbaumer B."/>
            <person name="Paricio N."/>
            <person name="Paulin L."/>
            <person name="Perea J."/>
            <person name="Perez-Alonso M."/>
            <person name="Perez-Ortin J.E."/>
            <person name="Pohl T.M."/>
            <person name="Prydz H."/>
            <person name="Purnelle B."/>
            <person name="Rasmussen S.W."/>
            <person name="Remacha M.A."/>
            <person name="Revuelta J.L."/>
            <person name="Rieger M."/>
            <person name="Salom D."/>
            <person name="Saluz H.P."/>
            <person name="Saiz J.E."/>
            <person name="Saren A.-M."/>
            <person name="Schaefer M."/>
            <person name="Scharfe M."/>
            <person name="Schmidt E.R."/>
            <person name="Schneider C."/>
            <person name="Scholler P."/>
            <person name="Schwarz S."/>
            <person name="Soler-Mira A."/>
            <person name="Urrestarazu L.A."/>
            <person name="Verhasselt P."/>
            <person name="Vissers S."/>
            <person name="Voet M."/>
            <person name="Volckaert G."/>
            <person name="Wagner G."/>
            <person name="Wambutt R."/>
            <person name="Wedler E."/>
            <person name="Wedler H."/>
            <person name="Woelfl S."/>
            <person name="Harris D.E."/>
            <person name="Bowman S."/>
            <person name="Brown D."/>
            <person name="Churcher C.M."/>
            <person name="Connor R."/>
            <person name="Dedman K."/>
            <person name="Gentles S."/>
            <person name="Hamlin N."/>
            <person name="Hunt S."/>
            <person name="Jones L."/>
            <person name="McDonald S."/>
            <person name="Murphy L.D."/>
            <person name="Niblett D."/>
            <person name="Odell C."/>
            <person name="Oliver K."/>
            <person name="Rajandream M.A."/>
            <person name="Richards C."/>
            <person name="Shore L."/>
            <person name="Walsh S.V."/>
            <person name="Barrell B.G."/>
            <person name="Dietrich F.S."/>
            <person name="Mulligan J.T."/>
            <person name="Allen E."/>
            <person name="Araujo R."/>
            <person name="Aviles E."/>
            <person name="Berno A."/>
            <person name="Carpenter J."/>
            <person name="Chen E."/>
            <person name="Cherry J.M."/>
            <person name="Chung E."/>
            <person name="Duncan M."/>
            <person name="Hunicke-Smith S."/>
            <person name="Hyman R.W."/>
            <person name="Komp C."/>
            <person name="Lashkari D."/>
            <person name="Lew H."/>
            <person name="Lin D."/>
            <person name="Mosedale D."/>
            <person name="Nakahara K."/>
            <person name="Namath A."/>
            <person name="Oefner P."/>
            <person name="Oh C."/>
            <person name="Petel F.X."/>
            <person name="Roberts D."/>
            <person name="Schramm S."/>
            <person name="Schroeder M."/>
            <person name="Shogren T."/>
            <person name="Shroff N."/>
            <person name="Winant A."/>
            <person name="Yelton M.A."/>
            <person name="Botstein D."/>
            <person name="Davis R.W."/>
            <person name="Johnston M."/>
            <person name="Andrews S."/>
            <person name="Brinkman R."/>
            <person name="Cooper J."/>
            <person name="Ding H."/>
            <person name="Du Z."/>
            <person name="Favello A."/>
            <person name="Fulton L."/>
            <person name="Gattung S."/>
            <person name="Greco T."/>
            <person name="Hallsworth K."/>
            <person name="Hawkins J."/>
            <person name="Hillier L.W."/>
            <person name="Jier M."/>
            <person name="Johnson D."/>
            <person name="Johnston L."/>
            <person name="Kirsten J."/>
            <person name="Kucaba T."/>
            <person name="Langston Y."/>
            <person name="Latreille P."/>
            <person name="Le T."/>
            <person name="Mardis E."/>
            <person name="Menezes S."/>
            <person name="Miller N."/>
            <person name="Nhan M."/>
            <person name="Pauley A."/>
            <person name="Peluso D."/>
            <person name="Rifkin L."/>
            <person name="Riles L."/>
            <person name="Taich A."/>
            <person name="Trevaskis E."/>
            <person name="Vignati D."/>
            <person name="Wilcox L."/>
            <person name="Wohldman P."/>
            <person name="Vaudin M."/>
            <person name="Wilson R."/>
            <person name="Waterston R."/>
            <person name="Albermann K."/>
            <person name="Hani J."/>
            <person name="Heumann K."/>
            <person name="Kleine K."/>
            <person name="Mewes H.-W."/>
            <person name="Zollner A."/>
            <person name="Zaccaria P."/>
        </authorList>
    </citation>
    <scope>NUCLEOTIDE SEQUENCE [LARGE SCALE GENOMIC DNA]</scope>
    <source>
        <strain>ATCC 204508 / S288c</strain>
    </source>
</reference>
<reference key="2">
    <citation type="journal article" date="2014" name="G3 (Bethesda)">
        <title>The reference genome sequence of Saccharomyces cerevisiae: Then and now.</title>
        <authorList>
            <person name="Engel S.R."/>
            <person name="Dietrich F.S."/>
            <person name="Fisk D.G."/>
            <person name="Binkley G."/>
            <person name="Balakrishnan R."/>
            <person name="Costanzo M.C."/>
            <person name="Dwight S.S."/>
            <person name="Hitz B.C."/>
            <person name="Karra K."/>
            <person name="Nash R.S."/>
            <person name="Weng S."/>
            <person name="Wong E.D."/>
            <person name="Lloyd P."/>
            <person name="Skrzypek M.S."/>
            <person name="Miyasato S.R."/>
            <person name="Simison M."/>
            <person name="Cherry J.M."/>
        </authorList>
    </citation>
    <scope>GENOME REANNOTATION</scope>
    <source>
        <strain>ATCC 204508 / S288c</strain>
    </source>
</reference>
<reference key="3">
    <citation type="journal article" date="2007" name="Genome Res.">
        <title>Approaching a complete repository of sequence-verified protein-encoding clones for Saccharomyces cerevisiae.</title>
        <authorList>
            <person name="Hu Y."/>
            <person name="Rolfs A."/>
            <person name="Bhullar B."/>
            <person name="Murthy T.V.S."/>
            <person name="Zhu C."/>
            <person name="Berger M.F."/>
            <person name="Camargo A.A."/>
            <person name="Kelley F."/>
            <person name="McCarron S."/>
            <person name="Jepson D."/>
            <person name="Richardson A."/>
            <person name="Raphael J."/>
            <person name="Moreira D."/>
            <person name="Taycher E."/>
            <person name="Zuo D."/>
            <person name="Mohr S."/>
            <person name="Kane M.F."/>
            <person name="Williamson J."/>
            <person name="Simpson A.J.G."/>
            <person name="Bulyk M.L."/>
            <person name="Harlow E."/>
            <person name="Marsischky G."/>
            <person name="Kolodner R.D."/>
            <person name="LaBaer J."/>
        </authorList>
    </citation>
    <scope>NUCLEOTIDE SEQUENCE [GENOMIC DNA]</scope>
    <source>
        <strain>ATCC 204508 / S288c</strain>
    </source>
</reference>
<reference key="4">
    <citation type="journal article" date="2002" name="Proc. Natl. Acad. Sci. U.S.A.">
        <title>The Saccharomyces cerevisiae Fin1 protein forms cell cycle-specific filaments between spindle pole bodies.</title>
        <authorList>
            <person name="van Hemert M.J."/>
            <person name="Lamers G.E."/>
            <person name="Klein D.C."/>
            <person name="Oosterkamp T.H."/>
            <person name="Steensma H.Y."/>
            <person name="van Heusden G.P."/>
        </authorList>
    </citation>
    <scope>INDUCTION</scope>
    <scope>SUBCELLULAR LOCATION</scope>
    <scope>FILAMENT FORMATION</scope>
</reference>
<reference key="5">
    <citation type="journal article" date="2002" name="Biochem. J.">
        <title>The Saccharomyces cerevisiae 14-3-3 protein Bmh2 is required for regulation of the phosphorylation status of Fin1, a novel intermediate filament protein.</title>
        <authorList>
            <person name="Mayordomo I."/>
            <person name="Sanz P."/>
        </authorList>
    </citation>
    <scope>DEPHOSPHORYLATION</scope>
</reference>
<reference key="6">
    <citation type="journal article" date="2003" name="J. Biol. Chem.">
        <title>Self-association of the spindle pole body-related intermediate filament protein Fin1p and its phosphorylation-dependent interaction with 14-3-3 proteins in yeast.</title>
        <authorList>
            <person name="van Hemert M.J."/>
            <person name="Deelder A.M."/>
            <person name="Molenaar C."/>
            <person name="Steensma H.Y."/>
            <person name="van Heusden G.P.H."/>
        </authorList>
    </citation>
    <scope>DIMERIZATION</scope>
    <scope>INTERACTION WITH BMH1 AND BMH2</scope>
</reference>
<reference key="7">
    <citation type="journal article" date="2003" name="Nature">
        <title>Targets of the cyclin-dependent kinase Cdk1.</title>
        <authorList>
            <person name="Ubersax J.A."/>
            <person name="Woodbury E.L."/>
            <person name="Quang P.N."/>
            <person name="Paraz M."/>
            <person name="Blethrow J.D."/>
            <person name="Shah K."/>
            <person name="Shokat K.M."/>
            <person name="Morgan D.O."/>
        </authorList>
    </citation>
    <scope>PHOSPHORYLATION BY CDC28</scope>
</reference>
<reference key="8">
    <citation type="journal article" date="2007" name="Proc. Natl. Acad. Sci. U.S.A.">
        <title>Analysis of phosphorylation sites on proteins from Saccharomyces cerevisiae by electron transfer dissociation (ETD) mass spectrometry.</title>
        <authorList>
            <person name="Chi A."/>
            <person name="Huttenhower C."/>
            <person name="Geer L.Y."/>
            <person name="Coon J.J."/>
            <person name="Syka J.E.P."/>
            <person name="Bai D.L."/>
            <person name="Shabanowitz J."/>
            <person name="Burke D.J."/>
            <person name="Troyanskaya O.G."/>
            <person name="Hunt D.F."/>
        </authorList>
    </citation>
    <scope>PHOSPHORYLATION [LARGE SCALE ANALYSIS] AT SER-54; THR-68; SER-74 AND SER-88</scope>
    <scope>IDENTIFICATION BY MASS SPECTROMETRY [LARGE SCALE ANALYSIS]</scope>
</reference>
<reference key="9">
    <citation type="journal article" date="2008" name="Mol. Cell. Proteomics">
        <title>A multidimensional chromatography technology for in-depth phosphoproteome analysis.</title>
        <authorList>
            <person name="Albuquerque C.P."/>
            <person name="Smolka M.B."/>
            <person name="Payne S.H."/>
            <person name="Bafna V."/>
            <person name="Eng J."/>
            <person name="Zhou H."/>
        </authorList>
    </citation>
    <scope>PHOSPHORYLATION [LARGE SCALE ANALYSIS] AT SER-74</scope>
    <scope>IDENTIFICATION BY MASS SPECTROMETRY [LARGE SCALE ANALYSIS]</scope>
</reference>
<reference key="10">
    <citation type="journal article" date="2009" name="Science">
        <title>Global analysis of Cdk1 substrate phosphorylation sites provides insights into evolution.</title>
        <authorList>
            <person name="Holt L.J."/>
            <person name="Tuch B.B."/>
            <person name="Villen J."/>
            <person name="Johnson A.D."/>
            <person name="Gygi S.P."/>
            <person name="Morgan D.O."/>
        </authorList>
    </citation>
    <scope>IDENTIFICATION BY MASS SPECTROMETRY [LARGE SCALE ANALYSIS]</scope>
</reference>